<proteinExistence type="inferred from homology"/>
<protein>
    <recommendedName>
        <fullName>Cytochrome c oxidase assembly protein COX20, mitochondrial</fullName>
    </recommendedName>
</protein>
<gene>
    <name type="primary">COX20</name>
    <name type="ordered locus">ABR199C</name>
</gene>
<accession>Q75D23</accession>
<evidence type="ECO:0000250" key="1"/>
<evidence type="ECO:0000255" key="2"/>
<evidence type="ECO:0000256" key="3">
    <source>
        <dbReference type="SAM" id="MobiDB-lite"/>
    </source>
</evidence>
<evidence type="ECO:0000305" key="4"/>
<comment type="function">
    <text evidence="1">Involved in the assembly of the cytochrome c oxidase complex.</text>
</comment>
<comment type="subcellular location">
    <subcellularLocation>
        <location evidence="1">Mitochondrion inner membrane</location>
        <topology evidence="1">Multi-pass membrane protein</topology>
    </subcellularLocation>
</comment>
<comment type="similarity">
    <text evidence="4">Belongs to the COX20 family.</text>
</comment>
<organism>
    <name type="scientific">Eremothecium gossypii (strain ATCC 10895 / CBS 109.51 / FGSC 9923 / NRRL Y-1056)</name>
    <name type="common">Yeast</name>
    <name type="synonym">Ashbya gossypii</name>
    <dbReference type="NCBI Taxonomy" id="284811"/>
    <lineage>
        <taxon>Eukaryota</taxon>
        <taxon>Fungi</taxon>
        <taxon>Dikarya</taxon>
        <taxon>Ascomycota</taxon>
        <taxon>Saccharomycotina</taxon>
        <taxon>Saccharomycetes</taxon>
        <taxon>Saccharomycetales</taxon>
        <taxon>Saccharomycetaceae</taxon>
        <taxon>Eremothecium</taxon>
    </lineage>
</organism>
<keyword id="KW-0472">Membrane</keyword>
<keyword id="KW-0496">Mitochondrion</keyword>
<keyword id="KW-0999">Mitochondrion inner membrane</keyword>
<keyword id="KW-1185">Reference proteome</keyword>
<keyword id="KW-0809">Transit peptide</keyword>
<keyword id="KW-0812">Transmembrane</keyword>
<keyword id="KW-1133">Transmembrane helix</keyword>
<dbReference type="EMBL" id="AE016815">
    <property type="protein sequence ID" value="AAS50972.1"/>
    <property type="molecule type" value="Genomic_DNA"/>
</dbReference>
<dbReference type="RefSeq" id="NP_983148.1">
    <property type="nucleotide sequence ID" value="NM_208501.1"/>
</dbReference>
<dbReference type="FunCoup" id="Q75D23">
    <property type="interactions" value="251"/>
</dbReference>
<dbReference type="STRING" id="284811.Q75D23"/>
<dbReference type="EnsemblFungi" id="AAS50972">
    <property type="protein sequence ID" value="AAS50972"/>
    <property type="gene ID" value="AGOS_ABR199C"/>
</dbReference>
<dbReference type="GeneID" id="4619258"/>
<dbReference type="KEGG" id="ago:AGOS_ABR199C"/>
<dbReference type="eggNOG" id="ENOG502S3BD">
    <property type="taxonomic scope" value="Eukaryota"/>
</dbReference>
<dbReference type="HOGENOM" id="CLU_125578_0_0_1"/>
<dbReference type="InParanoid" id="Q75D23"/>
<dbReference type="OMA" id="IVGWEQC"/>
<dbReference type="OrthoDB" id="14603at2759"/>
<dbReference type="Proteomes" id="UP000000591">
    <property type="component" value="Chromosome II"/>
</dbReference>
<dbReference type="GO" id="GO:0005743">
    <property type="term" value="C:mitochondrial inner membrane"/>
    <property type="evidence" value="ECO:0007669"/>
    <property type="project" value="UniProtKB-SubCell"/>
</dbReference>
<dbReference type="GO" id="GO:0005739">
    <property type="term" value="C:mitochondrion"/>
    <property type="evidence" value="ECO:0000318"/>
    <property type="project" value="GO_Central"/>
</dbReference>
<dbReference type="GO" id="GO:0051082">
    <property type="term" value="F:unfolded protein binding"/>
    <property type="evidence" value="ECO:0007669"/>
    <property type="project" value="EnsemblFungi"/>
</dbReference>
<dbReference type="GO" id="GO:0033617">
    <property type="term" value="P:mitochondrial cytochrome c oxidase assembly"/>
    <property type="evidence" value="ECO:0000318"/>
    <property type="project" value="GO_Central"/>
</dbReference>
<dbReference type="GO" id="GO:0043069">
    <property type="term" value="P:negative regulation of programmed cell death"/>
    <property type="evidence" value="ECO:0007669"/>
    <property type="project" value="EnsemblFungi"/>
</dbReference>
<dbReference type="InterPro" id="IPR022533">
    <property type="entry name" value="Cox20"/>
</dbReference>
<dbReference type="PANTHER" id="PTHR31586:SF1">
    <property type="entry name" value="CYTOCHROME C OXIDASE ASSEMBLY PROTEIN COX20, MITOCHONDRIAL"/>
    <property type="match status" value="1"/>
</dbReference>
<dbReference type="PANTHER" id="PTHR31586">
    <property type="entry name" value="CYTOCHROME C OXIDASE PROTEIN 20"/>
    <property type="match status" value="1"/>
</dbReference>
<dbReference type="Pfam" id="PF12597">
    <property type="entry name" value="Cox20"/>
    <property type="match status" value="1"/>
</dbReference>
<dbReference type="PIRSF" id="PIRSF007871">
    <property type="entry name" value="Cox20"/>
    <property type="match status" value="1"/>
</dbReference>
<feature type="transit peptide" description="Mitochondrion" evidence="2">
    <location>
        <begin position="1"/>
        <end status="unknown"/>
    </location>
</feature>
<feature type="chain" id="PRO_0000227689" description="Cytochrome c oxidase assembly protein COX20, mitochondrial">
    <location>
        <begin status="unknown"/>
        <end position="194"/>
    </location>
</feature>
<feature type="topological domain" description="Mitochondrial intermembrane" evidence="4">
    <location>
        <begin status="unknown"/>
        <end position="95"/>
    </location>
</feature>
<feature type="transmembrane region" description="Helical" evidence="2">
    <location>
        <begin position="96"/>
        <end position="115"/>
    </location>
</feature>
<feature type="topological domain" description="Mitochondrial matrix" evidence="4">
    <location>
        <begin position="116"/>
        <end position="119"/>
    </location>
</feature>
<feature type="transmembrane region" description="Helical" evidence="2">
    <location>
        <begin position="120"/>
        <end position="137"/>
    </location>
</feature>
<feature type="topological domain" description="Mitochondrial intermembrane" evidence="4">
    <location>
        <begin position="138"/>
        <end position="194"/>
    </location>
</feature>
<feature type="region of interest" description="Disordered" evidence="3">
    <location>
        <begin position="1"/>
        <end position="40"/>
    </location>
</feature>
<feature type="compositionally biased region" description="Low complexity" evidence="3">
    <location>
        <begin position="14"/>
        <end position="30"/>
    </location>
</feature>
<reference key="1">
    <citation type="journal article" date="2004" name="Science">
        <title>The Ashbya gossypii genome as a tool for mapping the ancient Saccharomyces cerevisiae genome.</title>
        <authorList>
            <person name="Dietrich F.S."/>
            <person name="Voegeli S."/>
            <person name="Brachat S."/>
            <person name="Lerch A."/>
            <person name="Gates K."/>
            <person name="Steiner S."/>
            <person name="Mohr C."/>
            <person name="Poehlmann R."/>
            <person name="Luedi P."/>
            <person name="Choi S."/>
            <person name="Wing R.A."/>
            <person name="Flavier A."/>
            <person name="Gaffney T.D."/>
            <person name="Philippsen P."/>
        </authorList>
    </citation>
    <scope>NUCLEOTIDE SEQUENCE [LARGE SCALE GENOMIC DNA]</scope>
    <source>
        <strain>ATCC 10895 / CBS 109.51 / FGSC 9923 / NRRL Y-1056</strain>
    </source>
</reference>
<reference key="2">
    <citation type="journal article" date="2013" name="G3 (Bethesda)">
        <title>Genomes of Ashbya fungi isolated from insects reveal four mating-type loci, numerous translocations, lack of transposons, and distinct gene duplications.</title>
        <authorList>
            <person name="Dietrich F.S."/>
            <person name="Voegeli S."/>
            <person name="Kuo S."/>
            <person name="Philippsen P."/>
        </authorList>
    </citation>
    <scope>GENOME REANNOTATION</scope>
    <source>
        <strain>ATCC 10895 / CBS 109.51 / FGSC 9923 / NRRL Y-1056</strain>
    </source>
</reference>
<sequence length="194" mass="21786">MAWWPFSRNNKPGVPEQDQVAAAPVQQRPAEPLPTNYTPGQRLLLEDTRPRFDTQSSASQQAVQRERATLADAWKTVRWEDFSLERMAGIPCFRDAGMAGFSAMVVAGSVTFLFHKNPVRAANWGVGGLLLGSIVGWEQCRMQRRRSFQVAEMARQTVAAKEAPMLRKPDNAQKAGAVSQASELPPKKPWYRFW</sequence>
<name>COX20_EREGS</name>